<proteinExistence type="evidence at protein level"/>
<reference key="1">
    <citation type="journal article" date="1996" name="DNA Res.">
        <title>A 718-kb DNA sequence of the Escherichia coli K-12 genome corresponding to the 12.7-28.0 min region on the linkage map.</title>
        <authorList>
            <person name="Oshima T."/>
            <person name="Aiba H."/>
            <person name="Baba T."/>
            <person name="Fujita K."/>
            <person name="Hayashi K."/>
            <person name="Honjo A."/>
            <person name="Ikemoto K."/>
            <person name="Inada T."/>
            <person name="Itoh T."/>
            <person name="Kajihara M."/>
            <person name="Kanai K."/>
            <person name="Kashimoto K."/>
            <person name="Kimura S."/>
            <person name="Kitagawa M."/>
            <person name="Makino K."/>
            <person name="Masuda S."/>
            <person name="Miki T."/>
            <person name="Mizobuchi K."/>
            <person name="Mori H."/>
            <person name="Motomura K."/>
            <person name="Nakamura Y."/>
            <person name="Nashimoto H."/>
            <person name="Nishio Y."/>
            <person name="Saito N."/>
            <person name="Sampei G."/>
            <person name="Seki Y."/>
            <person name="Tagami H."/>
            <person name="Takemoto K."/>
            <person name="Wada C."/>
            <person name="Yamamoto Y."/>
            <person name="Yano M."/>
            <person name="Horiuchi T."/>
        </authorList>
    </citation>
    <scope>NUCLEOTIDE SEQUENCE [LARGE SCALE GENOMIC DNA]</scope>
    <source>
        <strain>K12 / W3110 / ATCC 27325 / DSM 5911</strain>
    </source>
</reference>
<reference key="2">
    <citation type="journal article" date="1997" name="Science">
        <title>The complete genome sequence of Escherichia coli K-12.</title>
        <authorList>
            <person name="Blattner F.R."/>
            <person name="Plunkett G. III"/>
            <person name="Bloch C.A."/>
            <person name="Perna N.T."/>
            <person name="Burland V."/>
            <person name="Riley M."/>
            <person name="Collado-Vides J."/>
            <person name="Glasner J.D."/>
            <person name="Rode C.K."/>
            <person name="Mayhew G.F."/>
            <person name="Gregor J."/>
            <person name="Davis N.W."/>
            <person name="Kirkpatrick H.A."/>
            <person name="Goeden M.A."/>
            <person name="Rose D.J."/>
            <person name="Mau B."/>
            <person name="Shao Y."/>
        </authorList>
    </citation>
    <scope>NUCLEOTIDE SEQUENCE [LARGE SCALE GENOMIC DNA]</scope>
    <source>
        <strain>K12 / MG1655 / ATCC 47076</strain>
    </source>
</reference>
<reference key="3">
    <citation type="journal article" date="2006" name="Mol. Syst. Biol.">
        <title>Highly accurate genome sequences of Escherichia coli K-12 strains MG1655 and W3110.</title>
        <authorList>
            <person name="Hayashi K."/>
            <person name="Morooka N."/>
            <person name="Yamamoto Y."/>
            <person name="Fujita K."/>
            <person name="Isono K."/>
            <person name="Choi S."/>
            <person name="Ohtsubo E."/>
            <person name="Baba T."/>
            <person name="Wanner B.L."/>
            <person name="Mori H."/>
            <person name="Horiuchi T."/>
        </authorList>
    </citation>
    <scope>NUCLEOTIDE SEQUENCE [LARGE SCALE GENOMIC DNA]</scope>
    <source>
        <strain>K12 / W3110 / ATCC 27325 / DSM 5911</strain>
    </source>
</reference>
<reference key="4">
    <citation type="journal article" date="1993" name="J. Bacteriol.">
        <title>Identification, isolation, and characterization of the structural gene encoding the delta' subunit of Escherichia coli DNA polymerase III holoenzyme.</title>
        <authorList>
            <person name="Carter J.R."/>
            <person name="Franden M.A."/>
            <person name="Aebersold R.H."/>
            <person name="McHenry C.S."/>
        </authorList>
    </citation>
    <scope>NUCLEOTIDE SEQUENCE [GENOMIC DNA] OF 1-104</scope>
    <source>
        <strain>K12 / MG1655 / ATCC 47076</strain>
    </source>
</reference>
<reference key="5">
    <citation type="journal article" date="1993" name="J. Biol. Chem.">
        <title>DNA polymerase III accessory proteins. I. holA and holB encoding delta and delta'.</title>
        <authorList>
            <person name="Dong Z."/>
            <person name="Onrust R."/>
            <person name="Skangalis M."/>
            <person name="O'Donnell M."/>
        </authorList>
    </citation>
    <scope>NUCLEOTIDE SEQUENCE [GENOMIC DNA] OF 1-43</scope>
    <source>
        <strain>K12</strain>
    </source>
</reference>
<reference key="6">
    <citation type="journal article" date="2009" name="J. Biol. Chem.">
        <title>Widespread distribution of cell defense against D-aminoacyl-tRNAs.</title>
        <authorList>
            <person name="Wydau S."/>
            <person name="van der Rest G."/>
            <person name="Aubard C."/>
            <person name="Plateau P."/>
            <person name="Blanquet S."/>
        </authorList>
    </citation>
    <scope>FUNCTION AS A DEACETYLASE</scope>
    <scope>COFACTOR</scope>
</reference>
<reference key="7">
    <citation type="submission" date="2009-02" db="PDB data bank">
        <title>Crystal structure of ycfH, tatD homolog from Escherichia coli.</title>
        <authorList>
            <consortium name="New York structural genomix research consortium (NYSGXRC)"/>
        </authorList>
    </citation>
    <scope>X-RAY CRYSTALLOGRAPHY (1.9 ANGSTROMS) IN COMPLEX WITH ZINC IONS</scope>
</reference>
<accession>P0AFQ7</accession>
<accession>P37346</accession>
<accession>P78057</accession>
<name>YCFH_ECOLI</name>
<gene>
    <name type="primary">ycfH</name>
    <name type="ordered locus">b1100</name>
    <name type="ordered locus">JW1086</name>
</gene>
<organism>
    <name type="scientific">Escherichia coli (strain K12)</name>
    <dbReference type="NCBI Taxonomy" id="83333"/>
    <lineage>
        <taxon>Bacteria</taxon>
        <taxon>Pseudomonadati</taxon>
        <taxon>Pseudomonadota</taxon>
        <taxon>Gammaproteobacteria</taxon>
        <taxon>Enterobacterales</taxon>
        <taxon>Enterobacteriaceae</taxon>
        <taxon>Escherichia</taxon>
    </lineage>
</organism>
<evidence type="ECO:0000269" key="1">
    <source>
    </source>
</evidence>
<evidence type="ECO:0000269" key="2">
    <source ref="7"/>
</evidence>
<evidence type="ECO:0000305" key="3"/>
<evidence type="ECO:0007829" key="4">
    <source>
        <dbReference type="PDB" id="1YIX"/>
    </source>
</evidence>
<protein>
    <recommendedName>
        <fullName evidence="3">Uncharacterized metal-dependent hydrolase YcfH</fullName>
        <ecNumber evidence="3">3.1.-.-</ecNumber>
    </recommendedName>
</protein>
<comment type="function">
    <text evidence="1">Has D-tyrosyl-tRNA deacylase activity in vitro.</text>
</comment>
<comment type="cofactor">
    <cofactor evidence="1">
        <name>Co(2+)</name>
        <dbReference type="ChEBI" id="CHEBI:48828"/>
    </cofactor>
    <cofactor evidence="1">
        <name>Mn(2+)</name>
        <dbReference type="ChEBI" id="CHEBI:29035"/>
    </cofactor>
    <cofactor evidence="1">
        <name>Ni(2+)</name>
        <dbReference type="ChEBI" id="CHEBI:49786"/>
    </cofactor>
    <text evidence="2">Binds 2 divalent metal cations per subunit.</text>
</comment>
<comment type="interaction">
    <interactant intactId="EBI-560527">
        <id>P0AFQ7</id>
    </interactant>
    <interactant intactId="EBI-545666">
        <id>P15877</id>
        <label>gcd</label>
    </interactant>
    <organismsDiffer>false</organismsDiffer>
    <experiments>2</experiments>
</comment>
<comment type="similarity">
    <text evidence="3">Belongs to the metallo-dependent hydrolases superfamily. TatD-type hydrolase family.</text>
</comment>
<sequence length="265" mass="29809">MFLVDSHCHLDGLDYESLHKDVDDVLAKAAARDVKFCLAVATTLPGYLHMRDLVGERDNVVFSCGVHPLNQNDPYDVEDLRRLAAEEGVVALGETGLDYYYTPETKVRQQESFIHHIQIGRELNKPVIVHTRDARADTLAILREEKVTDCGGVLHCFTEDRETAGKLLDLGFYISFSGIVTFRNAEQLRDAARYVPLDRLLVETDSPYLAPVPHRGKENQPAMVRDVAEYMAVLKGVAVEELAQVTTDNFARLFHIDASRLQSIR</sequence>
<keyword id="KW-0002">3D-structure</keyword>
<keyword id="KW-0378">Hydrolase</keyword>
<keyword id="KW-0479">Metal-binding</keyword>
<keyword id="KW-1185">Reference proteome</keyword>
<feature type="chain" id="PRO_0000201995" description="Uncharacterized metal-dependent hydrolase YcfH">
    <location>
        <begin position="1"/>
        <end position="265"/>
    </location>
</feature>
<feature type="binding site" evidence="2">
    <location>
        <position position="7"/>
    </location>
    <ligand>
        <name>a divalent metal cation</name>
        <dbReference type="ChEBI" id="CHEBI:60240"/>
        <label>1</label>
    </ligand>
</feature>
<feature type="binding site" evidence="2">
    <location>
        <position position="9"/>
    </location>
    <ligand>
        <name>a divalent metal cation</name>
        <dbReference type="ChEBI" id="CHEBI:60240"/>
        <label>1</label>
    </ligand>
</feature>
<feature type="binding site" evidence="2">
    <location>
        <position position="94"/>
    </location>
    <ligand>
        <name>a divalent metal cation</name>
        <dbReference type="ChEBI" id="CHEBI:60240"/>
        <label>1</label>
    </ligand>
</feature>
<feature type="binding site" evidence="2">
    <location>
        <position position="94"/>
    </location>
    <ligand>
        <name>a divalent metal cation</name>
        <dbReference type="ChEBI" id="CHEBI:60240"/>
        <label>2</label>
    </ligand>
</feature>
<feature type="binding site" evidence="2">
    <location>
        <position position="130"/>
    </location>
    <ligand>
        <name>a divalent metal cation</name>
        <dbReference type="ChEBI" id="CHEBI:60240"/>
        <label>2</label>
    </ligand>
</feature>
<feature type="binding site" evidence="2">
    <location>
        <position position="155"/>
    </location>
    <ligand>
        <name>a divalent metal cation</name>
        <dbReference type="ChEBI" id="CHEBI:60240"/>
        <label>2</label>
    </ligand>
</feature>
<feature type="binding site" evidence="2">
    <location>
        <position position="205"/>
    </location>
    <ligand>
        <name>a divalent metal cation</name>
        <dbReference type="ChEBI" id="CHEBI:60240"/>
        <label>1</label>
    </ligand>
</feature>
<feature type="sequence conflict" description="In Ref. 4." evidence="3" ref="4">
    <original>L</original>
    <variation>Q</variation>
    <location>
        <position position="97"/>
    </location>
</feature>
<feature type="strand" evidence="4">
    <location>
        <begin position="3"/>
        <end position="8"/>
    </location>
</feature>
<feature type="helix" evidence="4">
    <location>
        <begin position="10"/>
        <end position="12"/>
    </location>
</feature>
<feature type="turn" evidence="4">
    <location>
        <begin position="15"/>
        <end position="18"/>
    </location>
</feature>
<feature type="helix" evidence="4">
    <location>
        <begin position="22"/>
        <end position="31"/>
    </location>
</feature>
<feature type="strand" evidence="4">
    <location>
        <begin position="34"/>
        <end position="39"/>
    </location>
</feature>
<feature type="helix" evidence="4">
    <location>
        <begin position="44"/>
        <end position="54"/>
    </location>
</feature>
<feature type="strand" evidence="4">
    <location>
        <begin position="60"/>
        <end position="64"/>
    </location>
</feature>
<feature type="helix" evidence="4">
    <location>
        <begin position="77"/>
        <end position="84"/>
    </location>
</feature>
<feature type="strand" evidence="4">
    <location>
        <begin position="89"/>
        <end position="98"/>
    </location>
</feature>
<feature type="helix" evidence="4">
    <location>
        <begin position="106"/>
        <end position="123"/>
    </location>
</feature>
<feature type="strand" evidence="4">
    <location>
        <begin position="127"/>
        <end position="133"/>
    </location>
</feature>
<feature type="helix" evidence="4">
    <location>
        <begin position="135"/>
        <end position="144"/>
    </location>
</feature>
<feature type="helix" evidence="4">
    <location>
        <begin position="147"/>
        <end position="149"/>
    </location>
</feature>
<feature type="strand" evidence="4">
    <location>
        <begin position="152"/>
        <end position="154"/>
    </location>
</feature>
<feature type="helix" evidence="4">
    <location>
        <begin position="161"/>
        <end position="168"/>
    </location>
</feature>
<feature type="turn" evidence="4">
    <location>
        <begin position="169"/>
        <end position="171"/>
    </location>
</feature>
<feature type="strand" evidence="4">
    <location>
        <begin position="173"/>
        <end position="176"/>
    </location>
</feature>
<feature type="helix" evidence="4">
    <location>
        <begin position="178"/>
        <end position="181"/>
    </location>
</feature>
<feature type="helix" evidence="4">
    <location>
        <begin position="186"/>
        <end position="194"/>
    </location>
</feature>
<feature type="helix" evidence="4">
    <location>
        <begin position="197"/>
        <end position="199"/>
    </location>
</feature>
<feature type="strand" evidence="4">
    <location>
        <begin position="200"/>
        <end position="202"/>
    </location>
</feature>
<feature type="helix" evidence="4">
    <location>
        <begin position="221"/>
        <end position="223"/>
    </location>
</feature>
<feature type="helix" evidence="4">
    <location>
        <begin position="224"/>
        <end position="235"/>
    </location>
</feature>
<feature type="helix" evidence="4">
    <location>
        <begin position="239"/>
        <end position="253"/>
    </location>
</feature>
<feature type="helix" evidence="4">
    <location>
        <begin position="258"/>
        <end position="261"/>
    </location>
</feature>
<dbReference type="EC" id="3.1.-.-" evidence="3"/>
<dbReference type="EMBL" id="U00096">
    <property type="protein sequence ID" value="AAC74184.1"/>
    <property type="molecule type" value="Genomic_DNA"/>
</dbReference>
<dbReference type="EMBL" id="AP009048">
    <property type="protein sequence ID" value="BAA35907.1"/>
    <property type="molecule type" value="Genomic_DNA"/>
</dbReference>
<dbReference type="EMBL" id="L01483">
    <property type="status" value="NOT_ANNOTATED_CDS"/>
    <property type="molecule type" value="Genomic_DNA"/>
</dbReference>
<dbReference type="EMBL" id="L04577">
    <property type="status" value="NOT_ANNOTATED_CDS"/>
    <property type="molecule type" value="Genomic_DNA"/>
</dbReference>
<dbReference type="PIR" id="A64854">
    <property type="entry name" value="A64854"/>
</dbReference>
<dbReference type="RefSeq" id="NP_415618.1">
    <property type="nucleotide sequence ID" value="NC_000913.3"/>
</dbReference>
<dbReference type="RefSeq" id="WP_000480245.1">
    <property type="nucleotide sequence ID" value="NZ_STEB01000016.1"/>
</dbReference>
<dbReference type="PDB" id="1YIX">
    <property type="method" value="X-ray"/>
    <property type="resolution" value="1.90 A"/>
    <property type="chains" value="A/B=1-265"/>
</dbReference>
<dbReference type="PDBsum" id="1YIX"/>
<dbReference type="SMR" id="P0AFQ7"/>
<dbReference type="BioGRID" id="4260943">
    <property type="interactions" value="197"/>
</dbReference>
<dbReference type="DIP" id="DIP-48157N"/>
<dbReference type="FunCoup" id="P0AFQ7">
    <property type="interactions" value="646"/>
</dbReference>
<dbReference type="IntAct" id="P0AFQ7">
    <property type="interactions" value="9"/>
</dbReference>
<dbReference type="STRING" id="511145.b1100"/>
<dbReference type="jPOST" id="P0AFQ7"/>
<dbReference type="PaxDb" id="511145-b1100"/>
<dbReference type="EnsemblBacteria" id="AAC74184">
    <property type="protein sequence ID" value="AAC74184"/>
    <property type="gene ID" value="b1100"/>
</dbReference>
<dbReference type="GeneID" id="945656"/>
<dbReference type="KEGG" id="ecj:JW1086"/>
<dbReference type="KEGG" id="eco:b1100"/>
<dbReference type="KEGG" id="ecoc:C3026_06645"/>
<dbReference type="PATRIC" id="fig|1411691.4.peg.1168"/>
<dbReference type="EchoBASE" id="EB2209"/>
<dbReference type="eggNOG" id="COG0084">
    <property type="taxonomic scope" value="Bacteria"/>
</dbReference>
<dbReference type="HOGENOM" id="CLU_031506_4_0_6"/>
<dbReference type="InParanoid" id="P0AFQ7"/>
<dbReference type="OMA" id="DGPYEYR"/>
<dbReference type="OrthoDB" id="9810005at2"/>
<dbReference type="PhylomeDB" id="P0AFQ7"/>
<dbReference type="BioCyc" id="EcoCyc:EG12303-MONOMER"/>
<dbReference type="EvolutionaryTrace" id="P0AFQ7"/>
<dbReference type="PRO" id="PR:P0AFQ7"/>
<dbReference type="Proteomes" id="UP000000625">
    <property type="component" value="Chromosome"/>
</dbReference>
<dbReference type="GO" id="GO:0005829">
    <property type="term" value="C:cytosol"/>
    <property type="evidence" value="ECO:0000314"/>
    <property type="project" value="EcoCyc"/>
</dbReference>
<dbReference type="GO" id="GO:0004536">
    <property type="term" value="F:DNA nuclease activity"/>
    <property type="evidence" value="ECO:0007669"/>
    <property type="project" value="InterPro"/>
</dbReference>
<dbReference type="GO" id="GO:0046872">
    <property type="term" value="F:metal ion binding"/>
    <property type="evidence" value="ECO:0007669"/>
    <property type="project" value="UniProtKB-KW"/>
</dbReference>
<dbReference type="CDD" id="cd01310">
    <property type="entry name" value="TatD_DNAse"/>
    <property type="match status" value="1"/>
</dbReference>
<dbReference type="FunFam" id="3.20.20.140:FF:000005">
    <property type="entry name" value="TatD family hydrolase"/>
    <property type="match status" value="1"/>
</dbReference>
<dbReference type="Gene3D" id="3.20.20.140">
    <property type="entry name" value="Metal-dependent hydrolases"/>
    <property type="match status" value="1"/>
</dbReference>
<dbReference type="InterPro" id="IPR018228">
    <property type="entry name" value="DNase_TatD-rel_CS"/>
</dbReference>
<dbReference type="InterPro" id="IPR032466">
    <property type="entry name" value="Metal_Hydrolase"/>
</dbReference>
<dbReference type="InterPro" id="IPR001130">
    <property type="entry name" value="TatD-like"/>
</dbReference>
<dbReference type="InterPro" id="IPR015991">
    <property type="entry name" value="TatD/YcfH-like"/>
</dbReference>
<dbReference type="NCBIfam" id="NF008075">
    <property type="entry name" value="PRK10812.1"/>
    <property type="match status" value="1"/>
</dbReference>
<dbReference type="NCBIfam" id="TIGR00010">
    <property type="entry name" value="YchF/TatD family DNA exonuclease"/>
    <property type="match status" value="1"/>
</dbReference>
<dbReference type="PANTHER" id="PTHR46124">
    <property type="entry name" value="D-AMINOACYL-TRNA DEACYLASE"/>
    <property type="match status" value="1"/>
</dbReference>
<dbReference type="PANTHER" id="PTHR46124:SF2">
    <property type="entry name" value="D-AMINOACYL-TRNA DEACYLASE"/>
    <property type="match status" value="1"/>
</dbReference>
<dbReference type="Pfam" id="PF01026">
    <property type="entry name" value="TatD_DNase"/>
    <property type="match status" value="1"/>
</dbReference>
<dbReference type="PIRSF" id="PIRSF005902">
    <property type="entry name" value="DNase_TatD"/>
    <property type="match status" value="1"/>
</dbReference>
<dbReference type="SUPFAM" id="SSF51556">
    <property type="entry name" value="Metallo-dependent hydrolases"/>
    <property type="match status" value="1"/>
</dbReference>
<dbReference type="PROSITE" id="PS01137">
    <property type="entry name" value="TATD_1"/>
    <property type="match status" value="1"/>
</dbReference>
<dbReference type="PROSITE" id="PS01091">
    <property type="entry name" value="TATD_3"/>
    <property type="match status" value="1"/>
</dbReference>